<name>C11B1_HUMAN</name>
<sequence>MALRAKAEVCMAVPWLSLQRAQALGTRAARVPRTVLPFEAMPRRPGNRWLRLLQIWREQGYEDLHLEVHQTFQELGPIFRYDLGGAGMVCVMLPEDVEKLQQVDSLHPHRMSLEPWVAYRQHRGHKCGVFLLNGPEWRFNRLRLNPEVLSPNAVQRFLPMVDAVARDFSQALKKKVLQNARGSLTLDVQPSIFHYTIEASNLALFGERLGLVGHSPSSASLNFLHALEVMFKSTVQLMFMPRSLSRWTSPKVWKEHFEAWDCIFQYGDNCIQKIYQELAFSRPQQYTSIVAELLLNAELSPDAIKANSMELTAGSVDTTVFPLLMTLFELARNPNVQQALRQESLAAAASISEHPQKATTELPLLRAALKETLRLYPVGLFLERVASSDLVLQNYHIPAGTLVRVFLYSLGRNPALFPRPERYNPQRWLDIRGSGRNFYHVPFGFGMRQCLGRRLAEAEMLLLLHHVLKHLQVETLTQEDIKMVYSFILRPSMFPLLTFRAIN</sequence>
<feature type="transit peptide" description="Mitochondrion">
    <location>
        <begin position="1"/>
        <end position="24"/>
    </location>
</feature>
<feature type="chain" id="PRO_0000003596" description="Cytochrome P450 11B1, mitochondrial">
    <location>
        <begin position="25"/>
        <end position="503"/>
    </location>
</feature>
<feature type="binding site" description="axial binding residue" evidence="3">
    <location>
        <position position="450"/>
    </location>
    <ligand>
        <name>heme</name>
        <dbReference type="ChEBI" id="CHEBI:30413"/>
    </ligand>
    <ligandPart>
        <name>Fe</name>
        <dbReference type="ChEBI" id="CHEBI:18248"/>
    </ligandPart>
</feature>
<feature type="splice variant" id="VSP_043308" description="In isoform 2." evidence="28">
    <location>
        <begin position="401"/>
        <end position="466"/>
    </location>
</feature>
<feature type="sequence variant" id="VAR_014145" description="In dbSNP:rs6405." evidence="4">
    <original>C</original>
    <variation>Y</variation>
    <location>
        <position position="10"/>
    </location>
</feature>
<feature type="sequence variant" id="VAR_074493" description="In AH4; classic; highly decreases steroid 11-beta-hydroxylase activity; dbSNP:rs193922538." evidence="24">
    <original>P</original>
    <variation>L</variation>
    <location>
        <position position="42"/>
    </location>
</feature>
<feature type="sequence variant" id="VAR_001260" description="In AH4; non-classic; highly decreases steroid 11-beta-hydroxylase activity; dbSNP:rs104894069." evidence="12 24 27">
    <original>P</original>
    <variation>S</variation>
    <location>
        <position position="42"/>
    </location>
</feature>
<feature type="sequence variant" id="VAR_014146" description="Decreases steroid 11-beta-hydroxylase activity; dbSNP:rs4534." evidence="4 5 12 19">
    <original>R</original>
    <variation>Q</variation>
    <location>
        <position position="43"/>
    </location>
</feature>
<feature type="sequence variant" id="VAR_014638" description="In dbSNP:rs5282.">
    <original>D</original>
    <variation>H</variation>
    <location>
        <position position="63"/>
    </location>
</feature>
<feature type="sequence variant" id="VAR_074494" description="In AH4; non-classic; highly decreases steroid 11-beta-hydroxylase activity; dbSNP:rs1489638195." evidence="18">
    <original>F</original>
    <variation>I</variation>
    <location>
        <position position="79"/>
    </location>
</feature>
<feature type="sequence variant" id="VAR_074495" description="In AH4; highly decreases steroid 11-beta-hydroxylase activity." evidence="12">
    <original>L</original>
    <variation>S</variation>
    <location>
        <position position="83"/>
    </location>
</feature>
<feature type="sequence variant" id="VAR_074496" description="In AH4; slightly decreases steroid 11-beta-hydroxylase activity; dbSNP:rs193922539." evidence="12">
    <original>M</original>
    <variation>I</variation>
    <location>
        <position position="88"/>
    </location>
</feature>
<feature type="sequence variant" id="VAR_065666" description="In AH4; almost abolishes steroid 11-beta-hydroxylase activity; dbSNP:rs104894070." evidence="9 12">
    <original>P</original>
    <variation>L</variation>
    <location>
        <position position="94"/>
    </location>
</feature>
<feature type="sequence variant" id="VAR_074497" description="In AH4; almost abolishes steroid 11-beta-hydroxylase activity; dbSNP:rs772003869." evidence="12">
    <original>W</original>
    <variation>C</variation>
    <location>
        <position position="116"/>
    </location>
</feature>
<feature type="sequence variant" id="VAR_074498" description="In AH4; abolishes steroid 11-beta-hydroxylase activity; dbSNP:rs772733691." evidence="12">
    <original>W</original>
    <variation>G</variation>
    <location>
        <position position="116"/>
    </location>
</feature>
<feature type="sequence variant" id="VAR_074499" description="In AH4; slightly decreases steroid 11-beta-hydroxylase activity; dbSNP:rs757389720." evidence="12">
    <original>H</original>
    <variation>R</variation>
    <location>
        <position position="125"/>
    </location>
</feature>
<feature type="sequence variant" id="VAR_074500" description="In AH4; abolishes steroid 11-beta-hydroxylase activity; dbSNP:rs377423817." evidence="12">
    <original>V</original>
    <variation>M</variation>
    <location>
        <position position="129"/>
    </location>
</feature>
<feature type="sequence variant" id="VAR_001261" description="In AH4; non-classic; highly decreases steroid 11-beta-hydroxylase activity; dbSNP:rs104894067." evidence="12 27">
    <original>N</original>
    <variation>H</variation>
    <location>
        <position position="133"/>
    </location>
</feature>
<feature type="sequence variant" id="VAR_074501" description="In AH4; highly decreases steroid 11-beta-hydroxylase activity." evidence="12">
    <original>P</original>
    <variation>S</variation>
    <location>
        <position position="135"/>
    </location>
</feature>
<feature type="sequence variant" id="VAR_074502" description="In AH4; decreases steroid 11-beta-hydroxylase activity." evidence="12">
    <original>F</original>
    <variation>L</variation>
    <location>
        <position position="139"/>
    </location>
</feature>
<feature type="sequence variant" id="VAR_075553" description="In AH4; uncertain significance; dbSNP:rs267601810." evidence="22">
    <original>R</original>
    <variation>Q</variation>
    <location>
        <position position="141"/>
    </location>
</feature>
<feature type="sequence variant" id="VAR_074503" description="In AH4; non-classic; highly decreases steroid 11-beta-hydroxylase activity; dbSNP:rs140336749." evidence="20">
    <original>R</original>
    <variation>W</variation>
    <location>
        <position position="143"/>
    </location>
</feature>
<feature type="sequence variant" id="VAR_074504" description="In AH4; non-classic; highly decreases steroid 11-beta-hydroxylase activity; dbSNP:rs142484434." evidence="21">
    <original>S</original>
    <variation>L</variation>
    <location>
        <position position="150"/>
    </location>
</feature>
<feature type="sequence variant" id="VAR_074505" description="In AH4; highly decreases steroid 11-beta-hydroxylase activity; dbSNP:rs1554653191." evidence="12">
    <original>L</original>
    <variation>P</variation>
    <location>
        <position position="158"/>
    </location>
</feature>
<feature type="sequence variant" id="VAR_074506" description="In AH4; decreases steroid 11-beta-hydroxylase activity; dbSNP:rs370266763." evidence="12">
    <original>P</original>
    <variation>L</variation>
    <location>
        <position position="159"/>
    </location>
</feature>
<feature type="sequence variant" id="VAR_014147" description="In dbSNP:rs5287." evidence="5">
    <original>M</original>
    <variation>I</variation>
    <location>
        <position position="160"/>
    </location>
</feature>
<feature type="sequence variant" id="VAR_074507" description="In AH4." evidence="12">
    <location>
        <position position="161"/>
    </location>
</feature>
<feature type="sequence variant" id="VAR_074508" description="In AH4; almost abolishes steroid 11-beta-hydroxylase activity; dbSNP:rs1554653185." evidence="12">
    <original>A</original>
    <variation>D</variation>
    <location>
        <position position="165"/>
    </location>
</feature>
<feature type="sequence variant" id="VAR_014639" description="In dbSNP:rs142163070.">
    <original>K</original>
    <variation>R</variation>
    <location>
        <position position="173"/>
    </location>
</feature>
<feature type="sequence variant" id="VAR_074509" description="In AH4; decreases steroid 11-beta-hydroxylase activity." evidence="12">
    <original>T</original>
    <variation>A</variation>
    <location>
        <position position="196"/>
    </location>
</feature>
<feature type="sequence variant" id="VAR_048462" description="In dbSNP:rs34620645.">
    <original>T</original>
    <variation>I</variation>
    <location>
        <position position="248"/>
    </location>
</feature>
<feature type="sequence variant" id="VAR_074510" description="In AH4; abolishes steroid 11-beta-hydroxylase activity." evidence="12">
    <location>
        <begin position="254"/>
        <end position="259"/>
    </location>
</feature>
<feature type="sequence variant" id="VAR_014640" description="In dbSNP:rs5288.">
    <original>F</original>
    <variation>L</variation>
    <location>
        <position position="257"/>
    </location>
</feature>
<feature type="sequence variant" id="VAR_074511" description="In AH4." evidence="12">
    <original>G</original>
    <variation>D</variation>
    <location>
        <position position="267"/>
    </location>
</feature>
<feature type="sequence variant" id="VAR_014641" description="In dbSNP:rs5291.">
    <original>S</original>
    <variation>N</variation>
    <location>
        <position position="281"/>
    </location>
</feature>
<feature type="sequence variant" id="VAR_014148" description="In dbSNP:rs5292." evidence="5">
    <original>L</original>
    <variation>V</variation>
    <location>
        <position position="293"/>
    </location>
</feature>
<feature type="sequence variant" id="VAR_074512" description="In AH4; non-classic; almost abolishes steroid 11-beta-hydroxylase activity; dbSNP:rs387907573." evidence="12 20">
    <original>L</original>
    <variation>P</variation>
    <location>
        <position position="299"/>
    </location>
</feature>
<feature type="sequence variant" id="VAR_074513" description="In AH4; non-classic; almost abolishes steroid 11-beta-hydroxylase activity; dbSNP:rs387907572." evidence="12 20">
    <original>A</original>
    <variation>V</variation>
    <location>
        <position position="306"/>
    </location>
</feature>
<feature type="sequence variant" id="VAR_074514" description="In AH4; abolishes steroid 11-beta-hydroxylase activity; dbSNP:rs387907574." evidence="20">
    <original>E</original>
    <variation>K</variation>
    <location>
        <position position="310"/>
    </location>
</feature>
<feature type="sequence variant" id="VAR_074515" description="In AH4; abolishes steroid 11-beta-hydroxylase activity; dbSNP:rs1336285846." evidence="12">
    <original>G</original>
    <variation>R</variation>
    <location>
        <position position="314"/>
    </location>
</feature>
<feature type="sequence variant" id="VAR_001262" description="In AH4; abolishes steroid 11-beta-hydroxylase activity; dbSNP:rs104894061." evidence="12">
    <original>T</original>
    <variation>M</variation>
    <location>
        <position position="318"/>
    </location>
</feature>
<feature type="sequence variant" id="VAR_074516" description="In AH4; dbSNP:rs1296969984." evidence="12">
    <original>T</original>
    <variation>P</variation>
    <location>
        <position position="318"/>
    </location>
</feature>
<feature type="sequence variant" id="VAR_065667" description="In AH4; dbSNP:rs104894061." evidence="9 12 22 25">
    <original>T</original>
    <variation>R</variation>
    <location>
        <position position="318"/>
    </location>
</feature>
<feature type="sequence variant" id="VAR_001263" description="In AH4; non-classic; decreases steroid 11-beta-hydroxylase activity; dbSNP:rs104894068." evidence="12 27">
    <original>T</original>
    <variation>M</variation>
    <location>
        <position position="319"/>
    </location>
</feature>
<feature type="sequence variant" id="VAR_074517" description="In AH4; dbSNP:rs1453371113." evidence="12">
    <original>F</original>
    <variation>V</variation>
    <location>
        <position position="321"/>
    </location>
</feature>
<feature type="sequence variant" id="VAR_074518" description="In AH4; abolishes steroid 11-beta-hydroxylase activity; dbSNP:rs1326688256." evidence="12">
    <original>A</original>
    <variation>V</variation>
    <location>
        <position position="331"/>
    </location>
</feature>
<feature type="sequence variant" id="VAR_075554" description="In AH4; high reduction of steroid 11-beta-monooxygenase activity; dbSNP:rs777626314." evidence="25">
    <original>R</original>
    <variation>G</variation>
    <location>
        <position position="332"/>
    </location>
</feature>
<feature type="sequence variant" id="VAR_074519" description="In AH4; non-classic; highly decreases steroid 11-beta-hydroxylase activity; dbSNP:rs149881706." evidence="20">
    <original>R</original>
    <variation>Q</variation>
    <location>
        <position position="332"/>
    </location>
</feature>
<feature type="sequence variant" id="VAR_074520" description="In AH4; uncertain significance; dbSNP:rs372115638." evidence="12">
    <original>R</original>
    <variation>S</variation>
    <location>
        <position position="341"/>
    </location>
</feature>
<feature type="sequence variant" id="VAR_014149" description="In dbSNP:rs6407." evidence="4">
    <original>A</original>
    <variation>T</variation>
    <location>
        <position position="348"/>
    </location>
</feature>
<feature type="sequence variant" id="VAR_074521" description="In AH4; decreases steroid 11-beta-hydroxylase activity; dbSNP:rs773245244." evidence="12">
    <original>R</original>
    <variation>C</variation>
    <location>
        <position position="366"/>
    </location>
</feature>
<feature type="sequence variant" id="VAR_074522" description="In AH4; abolishes steroid 11-beta-hydroxylase activity; dbSNP:rs104894071." evidence="12">
    <original>A</original>
    <variation>D</variation>
    <location>
        <position position="368"/>
    </location>
</feature>
<feature type="sequence variant" id="VAR_074523" description="In AH4; abolishes steroid 11-beta-hydroxylase activity; dbSNP:rs368944209." evidence="12">
    <original>E</original>
    <variation>G</variation>
    <location>
        <position position="371"/>
    </location>
</feature>
<feature type="sequence variant" id="VAR_001264" description="In AH4; abolishes steroid 11-beta-hydroxylase activity; dbSNP:rs104894062." evidence="12">
    <original>R</original>
    <variation>Q</variation>
    <location>
        <position position="374"/>
    </location>
</feature>
<feature type="sequence variant" id="VAR_065196" description="In AH4; dbSNP:rs1816901292." evidence="15">
    <original>G</original>
    <variation>V</variation>
    <location>
        <position position="379"/>
    </location>
</feature>
<feature type="sequence variant" id="VAR_074524" description="In AH4; dbSNP:rs1816900835." evidence="12">
    <original>R</original>
    <variation>G</variation>
    <location>
        <position position="384"/>
    </location>
</feature>
<feature type="sequence variant" id="VAR_074525" description="In AH4; abolishes steroid 11-beta-hydroxylase activity; dbSNP:rs764598023." evidence="12">
    <original>R</original>
    <variation>Q</variation>
    <location>
        <position position="384"/>
    </location>
</feature>
<feature type="sequence variant" id="VAR_014150" description="In dbSNP:rs4541." evidence="4 12 19 26">
    <original>A</original>
    <variation>V</variation>
    <location>
        <position position="386"/>
    </location>
</feature>
<feature type="sequence variant" id="VAR_074526" description="In AH4; decreases steroid 11-beta-hydroxylase activity; dbSNP:rs201300785." evidence="12">
    <original>T</original>
    <variation>A</variation>
    <location>
        <position position="401"/>
    </location>
</feature>
<feature type="sequence variant" id="VAR_048463" description="In dbSNP:rs4998896.">
    <original>R</original>
    <variation>H</variation>
    <location>
        <position position="404"/>
    </location>
</feature>
<feature type="sequence variant" id="VAR_074527" description="In AH4; uncertain significance; dbSNP:rs754432887." evidence="12">
    <original>R</original>
    <variation>H</variation>
    <location>
        <position position="427"/>
    </location>
</feature>
<feature type="sequence variant" id="VAR_074528" description="In AH4; abolishes steroid 11-beta-hydroxylase activity." evidence="12">
    <location>
        <position position="438"/>
    </location>
</feature>
<feature type="sequence variant" id="VAR_014642" description="In dbSNP:rs5294.">
    <original>Y</original>
    <variation>H</variation>
    <location>
        <position position="439"/>
    </location>
</feature>
<feature type="sequence variant" id="VAR_074529" description="In AH4; abolishes steroid 11-beta-hydroxylase activity; dbSNP:rs772169059." evidence="12">
    <original>V</original>
    <variation>G</variation>
    <location>
        <position position="441"/>
    </location>
</feature>
<feature type="sequence variant" id="VAR_074530" description="In AH4; dbSNP:rs779103938." evidence="12">
    <original>G</original>
    <variation>D</variation>
    <location>
        <position position="444"/>
    </location>
</feature>
<feature type="sequence variant" id="VAR_074531" description="In AH4; abolishes steroid 11-beta-hydroxylase activity; dbSNP:rs1221010438." evidence="12">
    <original>R</original>
    <variation>C</variation>
    <location>
        <position position="448"/>
    </location>
</feature>
<feature type="sequence variant" id="VAR_001265" description="In AH4; abolishes steroid 11-beta-hydroxylase activity; dbSNP:rs28934586." evidence="9 12 14 22 25">
    <original>R</original>
    <variation>H</variation>
    <location>
        <position position="448"/>
    </location>
</feature>
<feature type="sequence variant" id="VAR_074532" description="In AH4; abolishes steroid 11-beta-hydroxylase activity; dbSNP:rs1447069098." evidence="12">
    <original>R</original>
    <variation>Q</variation>
    <location>
        <position position="453"/>
    </location>
</feature>
<feature type="sequence variant" id="VAR_065197" description="In AH4; dbSNP:rs1563867899." evidence="16">
    <original>R</original>
    <variation>C</variation>
    <location>
        <position position="454"/>
    </location>
</feature>
<feature type="sequence variant" id="VAR_074533" description="In AH4; classic; abolishes steroid 11-beta-hydroxylase activity." evidence="21">
    <original>L</original>
    <variation>LL</variation>
    <location>
        <position position="463"/>
    </location>
</feature>
<feature type="sequence variant" id="VAR_074534" description="In AH4; dbSNP:rs750428278." evidence="12">
    <original>L</original>
    <variation>S</variation>
    <location>
        <position position="489"/>
    </location>
</feature>
<feature type="sequence variant" id="VAR_008687" evidence="6 23">
    <original>F</original>
    <variation>C</variation>
    <location>
        <position position="494"/>
    </location>
</feature>
<feature type="helix" evidence="38">
    <location>
        <begin position="38"/>
        <end position="40"/>
    </location>
</feature>
<feature type="helix" evidence="38">
    <location>
        <begin position="52"/>
        <end position="59"/>
    </location>
</feature>
<feature type="turn" evidence="38">
    <location>
        <begin position="60"/>
        <end position="63"/>
    </location>
</feature>
<feature type="helix" evidence="38">
    <location>
        <begin position="64"/>
        <end position="75"/>
    </location>
</feature>
<feature type="strand" evidence="38">
    <location>
        <begin position="77"/>
        <end position="83"/>
    </location>
</feature>
<feature type="strand" evidence="38">
    <location>
        <begin position="86"/>
        <end position="91"/>
    </location>
</feature>
<feature type="helix" evidence="38">
    <location>
        <begin position="94"/>
        <end position="102"/>
    </location>
</feature>
<feature type="helix" evidence="38">
    <location>
        <begin position="114"/>
        <end position="123"/>
    </location>
</feature>
<feature type="turn" evidence="38">
    <location>
        <begin position="129"/>
        <end position="131"/>
    </location>
</feature>
<feature type="helix" evidence="38">
    <location>
        <begin position="134"/>
        <end position="148"/>
    </location>
</feature>
<feature type="helix" evidence="38">
    <location>
        <begin position="151"/>
        <end position="178"/>
    </location>
</feature>
<feature type="strand" evidence="38">
    <location>
        <begin position="182"/>
        <end position="186"/>
    </location>
</feature>
<feature type="helix" evidence="38">
    <location>
        <begin position="189"/>
        <end position="205"/>
    </location>
</feature>
<feature type="strand" evidence="38">
    <location>
        <begin position="213"/>
        <end position="215"/>
    </location>
</feature>
<feature type="helix" evidence="38">
    <location>
        <begin position="218"/>
        <end position="238"/>
    </location>
</feature>
<feature type="helix" evidence="38">
    <location>
        <begin position="242"/>
        <end position="244"/>
    </location>
</feature>
<feature type="helix" evidence="38">
    <location>
        <begin position="245"/>
        <end position="280"/>
    </location>
</feature>
<feature type="helix" evidence="38">
    <location>
        <begin position="289"/>
        <end position="296"/>
    </location>
</feature>
<feature type="helix" evidence="38">
    <location>
        <begin position="301"/>
        <end position="313"/>
    </location>
</feature>
<feature type="turn" evidence="38">
    <location>
        <begin position="314"/>
        <end position="317"/>
    </location>
</feature>
<feature type="helix" evidence="38">
    <location>
        <begin position="320"/>
        <end position="332"/>
    </location>
</feature>
<feature type="helix" evidence="38">
    <location>
        <begin position="334"/>
        <end position="353"/>
    </location>
</feature>
<feature type="helix" evidence="38">
    <location>
        <begin position="355"/>
        <end position="357"/>
    </location>
</feature>
<feature type="helix" evidence="38">
    <location>
        <begin position="358"/>
        <end position="361"/>
    </location>
</feature>
<feature type="helix" evidence="38">
    <location>
        <begin position="363"/>
        <end position="375"/>
    </location>
</feature>
<feature type="strand" evidence="38">
    <location>
        <begin position="378"/>
        <end position="385"/>
    </location>
</feature>
<feature type="strand" evidence="38">
    <location>
        <begin position="390"/>
        <end position="392"/>
    </location>
</feature>
<feature type="strand" evidence="38">
    <location>
        <begin position="395"/>
        <end position="397"/>
    </location>
</feature>
<feature type="strand" evidence="38">
    <location>
        <begin position="402"/>
        <end position="406"/>
    </location>
</feature>
<feature type="helix" evidence="38">
    <location>
        <begin position="407"/>
        <end position="411"/>
    </location>
</feature>
<feature type="turn" evidence="38">
    <location>
        <begin position="414"/>
        <end position="416"/>
    </location>
</feature>
<feature type="strand" evidence="38">
    <location>
        <begin position="417"/>
        <end position="419"/>
    </location>
</feature>
<feature type="helix" evidence="38">
    <location>
        <begin position="426"/>
        <end position="430"/>
    </location>
</feature>
<feature type="helix" evidence="38">
    <location>
        <begin position="436"/>
        <end position="438"/>
    </location>
</feature>
<feature type="helix" evidence="38">
    <location>
        <begin position="446"/>
        <end position="448"/>
    </location>
</feature>
<feature type="helix" evidence="38">
    <location>
        <begin position="453"/>
        <end position="470"/>
    </location>
</feature>
<feature type="strand" evidence="38">
    <location>
        <begin position="471"/>
        <end position="474"/>
    </location>
</feature>
<feature type="strand" evidence="38">
    <location>
        <begin position="483"/>
        <end position="493"/>
    </location>
</feature>
<feature type="strand" evidence="38">
    <location>
        <begin position="497"/>
        <end position="501"/>
    </location>
</feature>
<keyword id="KW-0002">3D-structure</keyword>
<keyword id="KW-0025">Alternative splicing</keyword>
<keyword id="KW-0954">Congenital adrenal hyperplasia</keyword>
<keyword id="KW-0903">Direct protein sequencing</keyword>
<keyword id="KW-0225">Disease variant</keyword>
<keyword id="KW-0349">Heme</keyword>
<keyword id="KW-0408">Iron</keyword>
<keyword id="KW-0444">Lipid biosynthesis</keyword>
<keyword id="KW-0443">Lipid metabolism</keyword>
<keyword id="KW-0472">Membrane</keyword>
<keyword id="KW-0479">Metal-binding</keyword>
<keyword id="KW-0496">Mitochondrion</keyword>
<keyword id="KW-0999">Mitochondrion inner membrane</keyword>
<keyword id="KW-0503">Monooxygenase</keyword>
<keyword id="KW-0560">Oxidoreductase</keyword>
<keyword id="KW-1267">Proteomics identification</keyword>
<keyword id="KW-1185">Reference proteome</keyword>
<keyword id="KW-0752">Steroid biosynthesis</keyword>
<keyword id="KW-0755">Steroidogenesis</keyword>
<keyword id="KW-0809">Transit peptide</keyword>
<comment type="function">
    <text evidence="2 7 8 10 11 17 36">A cytochrome P450 monooxygenase involved in the biosynthesis of adrenal corticoids (PubMed:12530636, PubMed:1518866, PubMed:1775135, PubMed:18215163, PubMed:23322723). Catalyzes a variety of reactions that are essential for many species, including detoxification, defense, and the formation of endogenous chemicals like steroid hormones. Steroid 11beta, 18- and 19-hydroxylase with preferred regioselectivity at 11beta, then 18, and lastly 19 (By similarity). Catalyzes the hydroxylation of 11-deoxycortisol and 11-deoxycorticosterone (21-hydroxyprogesterone) at 11beta position, yielding cortisol or corticosterone, respectively, but cannot produce aldosterone (PubMed:12530636, PubMed:1518866, PubMed:1775135, PubMed:18215163, PubMed:23322723). Mechanistically, uses molecular oxygen inserting one oxygen atom into a substrate for hydroxylation and reducing the second into a water molecule. Two electrons are provided by NADPH via a two-protein mitochondrial transfer system comprising flavoprotein FDXR (adrenodoxin/ferredoxin reductase) and nonheme iron-sulfur protein FDX1 or FDX2 (adrenodoxin/ferredoxin) (PubMed:18215163). Due to its lack of 18-oxidation activity, it is incapable of generating aldosterone (PubMed:23322723). Could also be involved in the androgen metabolic pathway (Probable).</text>
</comment>
<comment type="catalytic activity">
    <reaction evidence="7 8 10 11 17">
        <text>a steroid + 2 reduced [adrenodoxin] + O2 + 2 H(+) = an 11beta-hydroxysteroid + 2 oxidized [adrenodoxin] + H2O</text>
        <dbReference type="Rhea" id="RHEA:15629"/>
        <dbReference type="Rhea" id="RHEA-COMP:9998"/>
        <dbReference type="Rhea" id="RHEA-COMP:9999"/>
        <dbReference type="ChEBI" id="CHEBI:15377"/>
        <dbReference type="ChEBI" id="CHEBI:15378"/>
        <dbReference type="ChEBI" id="CHEBI:15379"/>
        <dbReference type="ChEBI" id="CHEBI:33737"/>
        <dbReference type="ChEBI" id="CHEBI:33738"/>
        <dbReference type="ChEBI" id="CHEBI:35341"/>
        <dbReference type="ChEBI" id="CHEBI:35346"/>
        <dbReference type="EC" id="1.14.15.4"/>
    </reaction>
    <physiologicalReaction direction="left-to-right" evidence="32 33 34 35 36">
        <dbReference type="Rhea" id="RHEA:15630"/>
    </physiologicalReaction>
</comment>
<comment type="catalytic activity">
    <reaction evidence="7 10 11 17">
        <text>11-deoxycortisol + 2 reduced [adrenodoxin] + O2 + 2 H(+) = cortisol + 2 oxidized [adrenodoxin] + H2O</text>
        <dbReference type="Rhea" id="RHEA:46100"/>
        <dbReference type="Rhea" id="RHEA-COMP:9998"/>
        <dbReference type="Rhea" id="RHEA-COMP:9999"/>
        <dbReference type="ChEBI" id="CHEBI:15377"/>
        <dbReference type="ChEBI" id="CHEBI:15378"/>
        <dbReference type="ChEBI" id="CHEBI:15379"/>
        <dbReference type="ChEBI" id="CHEBI:17650"/>
        <dbReference type="ChEBI" id="CHEBI:28324"/>
        <dbReference type="ChEBI" id="CHEBI:33737"/>
        <dbReference type="ChEBI" id="CHEBI:33738"/>
    </reaction>
    <physiologicalReaction direction="left-to-right" evidence="32 34 35 36">
        <dbReference type="Rhea" id="RHEA:46101"/>
    </physiologicalReaction>
</comment>
<comment type="catalytic activity">
    <reaction evidence="7 8 10 11 17">
        <text>21-hydroxyprogesterone + 2 reduced [adrenodoxin] + O2 + 2 H(+) = corticosterone + 2 oxidized [adrenodoxin] + H2O</text>
        <dbReference type="Rhea" id="RHEA:46104"/>
        <dbReference type="Rhea" id="RHEA-COMP:9998"/>
        <dbReference type="Rhea" id="RHEA-COMP:9999"/>
        <dbReference type="ChEBI" id="CHEBI:15377"/>
        <dbReference type="ChEBI" id="CHEBI:15378"/>
        <dbReference type="ChEBI" id="CHEBI:15379"/>
        <dbReference type="ChEBI" id="CHEBI:16827"/>
        <dbReference type="ChEBI" id="CHEBI:16973"/>
        <dbReference type="ChEBI" id="CHEBI:33737"/>
        <dbReference type="ChEBI" id="CHEBI:33738"/>
    </reaction>
    <physiologicalReaction direction="left-to-right" evidence="32 33 34 35 36">
        <dbReference type="Rhea" id="RHEA:46105"/>
    </physiologicalReaction>
</comment>
<comment type="cofactor">
    <cofactor evidence="3">
        <name>heme</name>
        <dbReference type="ChEBI" id="CHEBI:30413"/>
    </cofactor>
</comment>
<comment type="biophysicochemical properties">
    <kinetics>
        <KM evidence="11">338.4 uM for 11-deoxycortisol</KM>
        <KM evidence="11">179.5 uM for 21-hydroxyprogesterone</KM>
        <text evidence="11">kcat is 1.67 sec(-1) with 11-deoxycortisol as substrate. kcat is 0.85 sec(-1) with 21-hydroxyprogesterone as substrate.</text>
    </kinetics>
</comment>
<comment type="pathway">
    <text evidence="11">Steroid biosynthesis; glucocorticoid biosynthesis.</text>
</comment>
<comment type="pathway">
    <text evidence="11">Steroid hormone biosynthesis.</text>
</comment>
<comment type="subcellular location">
    <subcellularLocation>
        <location evidence="1">Mitochondrion inner membrane</location>
        <topology evidence="1">Peripheral membrane protein</topology>
    </subcellularLocation>
</comment>
<comment type="alternative products">
    <event type="alternative splicing"/>
    <isoform>
        <id>P15538-1</id>
        <name>1</name>
        <sequence type="displayed"/>
    </isoform>
    <isoform>
        <id>P15538-2</id>
        <name>2</name>
        <sequence type="described" ref="VSP_043308"/>
    </isoform>
</comment>
<comment type="tissue specificity">
    <text evidence="13">Expressed in the zona fasciculata/reticularis of the adrenal cortex.</text>
</comment>
<comment type="disease" evidence="9 12 14 15 16 18 20 21 22 24 25 27">
    <disease id="DI-00044">
        <name>Adrenal hyperplasia 4</name>
        <acronym>AH4</acronym>
        <description>A form of congenital adrenal hyperplasia, a common recessive disease due to defective synthesis of cortisol. Congenital adrenal hyperplasia is characterized by androgen excess leading to ambiguous genitalia in affected females, rapid somatic growth during childhood in both sexes with premature closure of the epiphyses and short adult stature. Four clinical types: 'salt wasting' (SW, the most severe type), 'simple virilizing' (SV, less severely affected patients), with normal aldosterone biosynthesis, 'non-classic form' or late-onset (NC or LOAH) and 'cryptic' (asymptomatic).</description>
        <dbReference type="MIM" id="202010"/>
    </disease>
    <text>The disease is caused by variants affecting the gene represented in this entry.</text>
</comment>
<comment type="disease">
    <disease id="DI-02693">
        <name>Hyperaldosteronism, familial, 1</name>
        <acronym>HALD1</acronym>
        <description>A disorder characterized by hypertension, variable hyperaldosteronism, and abnormal adrenal steroid production, including 18-oxocortisol and 18-hydroxycortisol. There is significant phenotypic heterogeneity, and some individuals never develop hypertension.</description>
        <dbReference type="MIM" id="103900"/>
    </disease>
    <text>The disease is caused by variants affecting the gene represented in this entry. The molecular defect causing hyperaldosteronism familial 1 is an anti-Lepore-type fusion of the CYP11B1 and CYP11B2 genes. The hybrid gene has the promoting part of CYP11B1, ACTH-sensitive, and the coding part of CYP11B2.</text>
</comment>
<comment type="similarity">
    <text evidence="31">Belongs to the cytochrome P450 family.</text>
</comment>
<reference key="1">
    <citation type="journal article" date="1989" name="J. Biol. Chem.">
        <title>Characterization of two genes encoding human steroid 11 beta-hydroxylase (P-450(11) beta).</title>
        <authorList>
            <person name="Mornet E."/>
            <person name="Dupont J."/>
            <person name="Vitek A."/>
            <person name="White P.C."/>
        </authorList>
    </citation>
    <scope>NUCLEOTIDE SEQUENCE [GENOMIC DNA]</scope>
    <scope>VARIANT CYS-494</scope>
</reference>
<reference key="2">
    <citation type="journal article" date="1990" name="FEBS Lett.">
        <title>Cloning of cDNA and genomic DNA for human cytochrome P-45011 beta.</title>
        <authorList>
            <person name="Kawamoto T."/>
            <person name="Mitsuuchi Y."/>
            <person name="Toda K."/>
            <person name="Miyahara K."/>
            <person name="Yokoyama Y."/>
            <person name="Nakao K."/>
            <person name="Hosoda K."/>
            <person name="Yamamoto Y."/>
            <person name="Imura H."/>
            <person name="Shizuta Y."/>
        </authorList>
    </citation>
    <scope>NUCLEOTIDE SEQUENCE [MRNA] (ISOFORM 1)</scope>
    <scope>PARTIAL PROTEIN SEQUENCE</scope>
    <scope>VARIANTS GLN-43 AND VAL-386</scope>
</reference>
<reference key="3">
    <citation type="submission" date="2007-12" db="EMBL/GenBank/DDBJ databases">
        <authorList>
            <consortium name="NHLBI resequencing and genotyping service (RS&amp;G)"/>
        </authorList>
    </citation>
    <scope>NUCLEOTIDE SEQUENCE [GENOMIC DNA]</scope>
</reference>
<reference key="4">
    <citation type="journal article" date="2006" name="Nature">
        <title>DNA sequence and analysis of human chromosome 8.</title>
        <authorList>
            <person name="Nusbaum C."/>
            <person name="Mikkelsen T.S."/>
            <person name="Zody M.C."/>
            <person name="Asakawa S."/>
            <person name="Taudien S."/>
            <person name="Garber M."/>
            <person name="Kodira C.D."/>
            <person name="Schueler M.G."/>
            <person name="Shimizu A."/>
            <person name="Whittaker C.A."/>
            <person name="Chang J.L."/>
            <person name="Cuomo C.A."/>
            <person name="Dewar K."/>
            <person name="FitzGerald M.G."/>
            <person name="Yang X."/>
            <person name="Allen N.R."/>
            <person name="Anderson S."/>
            <person name="Asakawa T."/>
            <person name="Blechschmidt K."/>
            <person name="Bloom T."/>
            <person name="Borowsky M.L."/>
            <person name="Butler J."/>
            <person name="Cook A."/>
            <person name="Corum B."/>
            <person name="DeArellano K."/>
            <person name="DeCaprio D."/>
            <person name="Dooley K.T."/>
            <person name="Dorris L. III"/>
            <person name="Engels R."/>
            <person name="Gloeckner G."/>
            <person name="Hafez N."/>
            <person name="Hagopian D.S."/>
            <person name="Hall J.L."/>
            <person name="Ishikawa S.K."/>
            <person name="Jaffe D.B."/>
            <person name="Kamat A."/>
            <person name="Kudoh J."/>
            <person name="Lehmann R."/>
            <person name="Lokitsang T."/>
            <person name="Macdonald P."/>
            <person name="Major J.E."/>
            <person name="Matthews C.D."/>
            <person name="Mauceli E."/>
            <person name="Menzel U."/>
            <person name="Mihalev A.H."/>
            <person name="Minoshima S."/>
            <person name="Murayama Y."/>
            <person name="Naylor J.W."/>
            <person name="Nicol R."/>
            <person name="Nguyen C."/>
            <person name="O'Leary S.B."/>
            <person name="O'Neill K."/>
            <person name="Parker S.C.J."/>
            <person name="Polley A."/>
            <person name="Raymond C.K."/>
            <person name="Reichwald K."/>
            <person name="Rodriguez J."/>
            <person name="Sasaki T."/>
            <person name="Schilhabel M."/>
            <person name="Siddiqui R."/>
            <person name="Smith C.L."/>
            <person name="Sneddon T.P."/>
            <person name="Talamas J.A."/>
            <person name="Tenzin P."/>
            <person name="Topham K."/>
            <person name="Venkataraman V."/>
            <person name="Wen G."/>
            <person name="Yamazaki S."/>
            <person name="Young S.K."/>
            <person name="Zeng Q."/>
            <person name="Zimmer A.R."/>
            <person name="Rosenthal A."/>
            <person name="Birren B.W."/>
            <person name="Platzer M."/>
            <person name="Shimizu N."/>
            <person name="Lander E.S."/>
        </authorList>
    </citation>
    <scope>NUCLEOTIDE SEQUENCE [LARGE SCALE GENOMIC DNA]</scope>
</reference>
<reference key="5">
    <citation type="submission" date="2005-09" db="EMBL/GenBank/DDBJ databases">
        <authorList>
            <person name="Mural R.J."/>
            <person name="Istrail S."/>
            <person name="Sutton G.G."/>
            <person name="Florea L."/>
            <person name="Halpern A.L."/>
            <person name="Mobarry C.M."/>
            <person name="Lippert R."/>
            <person name="Walenz B."/>
            <person name="Shatkay H."/>
            <person name="Dew I."/>
            <person name="Miller J.R."/>
            <person name="Flanigan M.J."/>
            <person name="Edwards N.J."/>
            <person name="Bolanos R."/>
            <person name="Fasulo D."/>
            <person name="Halldorsson B.V."/>
            <person name="Hannenhalli S."/>
            <person name="Turner R."/>
            <person name="Yooseph S."/>
            <person name="Lu F."/>
            <person name="Nusskern D.R."/>
            <person name="Shue B.C."/>
            <person name="Zheng X.H."/>
            <person name="Zhong F."/>
            <person name="Delcher A.L."/>
            <person name="Huson D.H."/>
            <person name="Kravitz S.A."/>
            <person name="Mouchard L."/>
            <person name="Reinert K."/>
            <person name="Remington K.A."/>
            <person name="Clark A.G."/>
            <person name="Waterman M.S."/>
            <person name="Eichler E.E."/>
            <person name="Adams M.D."/>
            <person name="Hunkapiller M.W."/>
            <person name="Myers E.W."/>
            <person name="Venter J.C."/>
        </authorList>
    </citation>
    <scope>NUCLEOTIDE SEQUENCE [LARGE SCALE GENOMIC DNA]</scope>
</reference>
<reference key="6">
    <citation type="journal article" date="2004" name="Genome Res.">
        <title>The status, quality, and expansion of the NIH full-length cDNA project: the Mammalian Gene Collection (MGC).</title>
        <authorList>
            <consortium name="The MGC Project Team"/>
        </authorList>
    </citation>
    <scope>NUCLEOTIDE SEQUENCE [LARGE SCALE MRNA] (ISOFORMS 1 AND 2)</scope>
</reference>
<reference key="7">
    <citation type="journal article" date="1993" name="J. Clin. Endocrinol. Metab.">
        <title>A nonsense mutation (TGG [Trp116]--&gt;TAG [Stop]) in CYP11B1 causes steroid 11 beta-hydroxylase deficiency.</title>
        <authorList>
            <person name="Naiki Y."/>
            <person name="Kawamoto T."/>
            <person name="Mitsuuchi Y."/>
            <person name="Miyahara K."/>
            <person name="Toda K."/>
            <person name="Orii T."/>
            <person name="Imura H."/>
            <person name="Shizuta Y."/>
        </authorList>
    </citation>
    <scope>NUCLEOTIDE SEQUENCE [GENOMIC DNA] OF 1-132</scope>
    <source>
        <tissue>Peripheral blood</tissue>
    </source>
</reference>
<reference key="8">
    <citation type="journal article" date="1987" name="Proc. Natl. Acad. Sci. U.S.A.">
        <title>Cloning of cDNA encoding steroid 11 beta-hydroxylase (P450c11).</title>
        <authorList>
            <person name="Chua S.C."/>
            <person name="Szabo P."/>
            <person name="Vitek A."/>
            <person name="Grzeschik K.H."/>
            <person name="John M."/>
            <person name="White P.C."/>
        </authorList>
    </citation>
    <scope>PRELIMINARY NUCLEOTIDE SEQUENCE [MRNA] OF 216-466</scope>
    <scope>VARIANT VAL-386</scope>
</reference>
<reference key="9">
    <citation type="journal article" date="1992" name="Proc. Natl. Acad. Sci. U.S.A.">
        <title>Role of steroid 11 beta-hydroxylase and steroid 18-hydroxylase in the biosynthesis of glucocorticoids and mineralocorticoids in humans.</title>
        <authorList>
            <person name="Kawamoto T."/>
            <person name="Mitsuuchi Y."/>
            <person name="Toda K."/>
            <person name="Yokoyama Y."/>
            <person name="Miyahara K."/>
            <person name="Miura S."/>
            <person name="Ohnishi T."/>
            <person name="Icikawa Y."/>
            <person name="Nakao K."/>
            <person name="Imura H."/>
            <person name="Ulick S."/>
            <person name="Shuzuta Y."/>
        </authorList>
    </citation>
    <scope>NUCLEOTIDE SEQUENCE [GENOMIC DNA] OF 1-30</scope>
</reference>
<reference key="10">
    <citation type="journal article" date="1991" name="Mol. Endocrinol.">
        <title>The product of the CYP11B2 gene is required for aldosterone biosynthesis in the human adrenal cortex.</title>
        <authorList>
            <person name="Curnow K.M."/>
            <person name="Tusie-Luna M.T."/>
            <person name="Pascoe L."/>
            <person name="Natarajan R."/>
            <person name="Gu J.L."/>
            <person name="Nadler J.L."/>
            <person name="White P.C."/>
        </authorList>
    </citation>
    <scope>FUNCTION</scope>
    <scope>CATALYTIC ACTIVITY</scope>
</reference>
<reference key="11">
    <citation type="journal article" date="1992" name="Proc. Natl. Acad. Sci. U.S.A.">
        <title>Glucocorticoid-suppressible hyperaldosteronism results from hybrid genes created by unequal crossovers between CYP11B1 and CYP11B2.</title>
        <authorList>
            <person name="Pascoe L."/>
            <person name="Curnow K.M."/>
            <person name="Slutsker L."/>
            <person name="Connell J.M."/>
            <person name="Speiser P.W."/>
            <person name="New M.I."/>
            <person name="White P.C."/>
        </authorList>
    </citation>
    <scope>FUNCTION</scope>
    <scope>CATALYTIC ACTIVITY</scope>
</reference>
<reference key="12">
    <citation type="journal article" date="2002" name="Endocr. Res.">
        <title>Modulation of steroid hydroxylase activity in stably transfected V79MZh11B1 and V79MZh11B2 cells by PKC and PKD inhibitors.</title>
        <authorList>
            <person name="Bureik M."/>
            <person name="Zeeh A."/>
            <person name="Bernhardt R."/>
        </authorList>
    </citation>
    <scope>FUNCTION</scope>
    <scope>CATALYTIC ACTIVITY</scope>
</reference>
<reference key="13">
    <citation type="journal article" date="2008" name="FEBS J.">
        <title>Purification and functional characterization of human 11beta hydroxylase expressed in Escherichia coli.</title>
        <authorList>
            <person name="Zoellner A."/>
            <person name="Kagawa N."/>
            <person name="Waterman M.R."/>
            <person name="Nonaka Y."/>
            <person name="Takio K."/>
            <person name="Shiro Y."/>
            <person name="Hannemann F."/>
            <person name="Bernhardt R."/>
        </authorList>
    </citation>
    <scope>FUNCTION</scope>
    <scope>CATALYTIC ACTIVITY</scope>
    <scope>BIOPHYSICOCHEMICAL PROPERTIES</scope>
    <scope>PATHWAY</scope>
</reference>
<reference key="14">
    <citation type="journal article" date="2010" name="J. Clin. Endocrinol. Metab.">
        <title>Adrenocortical zonation in humans under normal and pathological conditions.</title>
        <authorList>
            <person name="Nishimoto K."/>
            <person name="Nakagawa K."/>
            <person name="Li D."/>
            <person name="Kosaka T."/>
            <person name="Oya M."/>
            <person name="Mikami S."/>
            <person name="Shibata H."/>
            <person name="Itoh H."/>
            <person name="Mitani F."/>
            <person name="Yamazaki T."/>
            <person name="Ogishima T."/>
            <person name="Suematsu M."/>
            <person name="Mukai K."/>
        </authorList>
    </citation>
    <scope>TISSUE SPECIFICITY</scope>
</reference>
<reference key="15">
    <citation type="journal article" date="2013" name="Mol. Endocrinol.">
        <title>Structural insights into aldosterone synthase substrate specificity and targeted inhibition.</title>
        <authorList>
            <person name="Strushkevich N."/>
            <person name="Gilep A.A."/>
            <person name="Shen L."/>
            <person name="Arrowsmith C.H."/>
            <person name="Edwards A.M."/>
            <person name="Usanov S.A."/>
            <person name="Park H.W."/>
        </authorList>
    </citation>
    <scope>FUNCTION</scope>
    <scope>CATALYTIC ACTIVITY</scope>
</reference>
<reference key="16">
    <citation type="journal article" date="1991" name="J. Clin. Invest.">
        <title>A mutation in CYP11B1 (Arg-448--&gt;His) associated with steroid 11 beta-hydroxylase deficiency in Jews of Moroccan origin.</title>
        <authorList>
            <person name="White P.C."/>
            <person name="Dupont J."/>
            <person name="New M.I."/>
            <person name="Leiberman E."/>
            <person name="Hochberg Z."/>
            <person name="Roesler A."/>
        </authorList>
    </citation>
    <scope>VARIANT AH4 HIS-448</scope>
</reference>
<reference key="17">
    <citation type="journal article" date="1997" name="Hum. Mol. Genet.">
        <title>CYP11B1 mutations causing non-classic adrenal hyperplasia due to 11 beta-hydroxylase deficiency.</title>
        <authorList>
            <person name="Joehrer K."/>
            <person name="Geley S."/>
            <person name="Strasser-Wozak E.M.C."/>
            <person name="Azziz R."/>
            <person name="Wollmann H.A."/>
            <person name="Schmitt K."/>
            <person name="Kofler R."/>
            <person name="White P.C."/>
        </authorList>
    </citation>
    <scope>VARIANTS AH4 SER-42; HIS-133 AND MET-319</scope>
</reference>
<reference key="18">
    <citation type="journal article" date="1999" name="J. Clin. Endocrinol. Metab.">
        <title>The C494F variant in the CYP11B1 gene is a sequence polymorphism in the Spanish population.</title>
        <authorList>
            <person name="Loidi L."/>
            <person name="Quinteiro C."/>
            <person name="Barros F."/>
            <person name="Dominguez F."/>
            <person name="Barreiro J."/>
            <person name="Pombo M."/>
        </authorList>
    </citation>
    <scope>VARIANT CYS-494</scope>
</reference>
<reference key="19">
    <citation type="journal article" date="1999" name="Nat. Genet.">
        <title>Characterization of single-nucleotide polymorphisms in coding regions of human genes.</title>
        <authorList>
            <person name="Cargill M."/>
            <person name="Altshuler D."/>
            <person name="Ireland J."/>
            <person name="Sklar P."/>
            <person name="Ardlie K."/>
            <person name="Patil N."/>
            <person name="Shaw N."/>
            <person name="Lane C.R."/>
            <person name="Lim E.P."/>
            <person name="Kalyanaraman N."/>
            <person name="Nemesh J."/>
            <person name="Ziaugra L."/>
            <person name="Friedland L."/>
            <person name="Rolfe A."/>
            <person name="Warrington J."/>
            <person name="Lipshutz R."/>
            <person name="Daley G.Q."/>
            <person name="Lander E.S."/>
        </authorList>
    </citation>
    <scope>VARIANTS TYR-10; GLN-43; THR-348 AND VAL-386</scope>
</reference>
<reference key="20">
    <citation type="journal article" date="1999" name="Nat. Genet.">
        <authorList>
            <person name="Cargill M."/>
            <person name="Altshuler D."/>
            <person name="Ireland J."/>
            <person name="Sklar P."/>
            <person name="Ardlie K."/>
            <person name="Patil N."/>
            <person name="Shaw N."/>
            <person name="Lane C.R."/>
            <person name="Lim E.P."/>
            <person name="Kalyanaraman N."/>
            <person name="Nemesh J."/>
            <person name="Ziaugra L."/>
            <person name="Friedland L."/>
            <person name="Rolfe A."/>
            <person name="Warrington J."/>
            <person name="Lipshutz R."/>
            <person name="Daley G.Q."/>
            <person name="Lander E.S."/>
        </authorList>
    </citation>
    <scope>ERRATUM OF PUBMED:10391209</scope>
</reference>
<reference key="21">
    <citation type="journal article" date="1999" name="Nat. Genet.">
        <title>Patterns of single-nucleotide polymorphisms in candidate genes for blood-pressure homeostasis.</title>
        <authorList>
            <person name="Halushka M.K."/>
            <person name="Fan J.-B."/>
            <person name="Bentley K."/>
            <person name="Hsie L."/>
            <person name="Shen N."/>
            <person name="Weder A."/>
            <person name="Cooper R."/>
            <person name="Lipshutz R."/>
            <person name="Chakravarti A."/>
        </authorList>
    </citation>
    <scope>VARIANTS GLN-43; ILE-160 AND VAL-293</scope>
</reference>
<reference key="22">
    <citation type="journal article" date="2005" name="J. Clin. Endocrinol. Metab.">
        <title>21-Hydroxylase and 11beta-hydroxylase mutations in Romanian patients with classic congenital adrenal hyperplasia.</title>
        <authorList>
            <person name="Grigorescu Sido A."/>
            <person name="Weber M.M."/>
            <person name="Grigorescu Sido P."/>
            <person name="Clausmeyer S."/>
            <person name="Heinrich U."/>
            <person name="Schulze E."/>
        </authorList>
    </citation>
    <scope>VARIANTS AH4 LEU-94; ARG-318 AND HIS-448</scope>
</reference>
<reference key="23">
    <citation type="journal article" date="2010" name="Clin. Genet.">
        <title>Only two mutations detected in 15 Tunisian patients with 11beta-hydroxylase deficiency: the p.Q356X and the novel p.G379V.</title>
        <authorList>
            <person name="Kharrat M."/>
            <person name="Trabelsi S."/>
            <person name="Chaabouni M."/>
            <person name="Maazoul F."/>
            <person name="Kraoua L."/>
            <person name="Ben Jemaa L."/>
            <person name="Gandoura N."/>
            <person name="Barsaoui S."/>
            <person name="Morel Y."/>
            <person name="M'rad R."/>
            <person name="Chaabouni H."/>
        </authorList>
    </citation>
    <scope>VARIANT AH4 VAL-379</scope>
</reference>
<reference key="24">
    <citation type="journal article" date="2010" name="J. Clin. Endocrinol. Metab.">
        <title>Functional consequences of seven novel mutations in the CYP11B1 gene: four mutations associated with nonclassic and three mutations causing classic 11{beta}-hydroxylase deficiency.</title>
        <authorList>
            <person name="Parajes S."/>
            <person name="Loidi L."/>
            <person name="Reisch N."/>
            <person name="Dhir V."/>
            <person name="Rose I.T."/>
            <person name="Hampel R."/>
            <person name="Quinkler M."/>
            <person name="Conway G.S."/>
            <person name="Castro-Feijoo L."/>
            <person name="Araujo-Vilar D."/>
            <person name="Pombo M."/>
            <person name="Dominguez F."/>
            <person name="Williams E.L."/>
            <person name="Cole T.R."/>
            <person name="Kirk J.M."/>
            <person name="Kaminsky E."/>
            <person name="Rumsby G."/>
            <person name="Arlt W."/>
            <person name="Krone N."/>
        </authorList>
    </citation>
    <scope>VARIANTS AH4 SER-42; SER-83; ILE-88; LEU-94; CYS-116; GLY-116; ARG-125; MET-129; HIS-133; SER-135; LEU-139; PRO-158; LEU-159; VAL-161 DEL; ASP-165; ALA-196; 254-LYS--ALA-259 DEL; ASP-267; PRO-299; VAL-306; ARG-314; ARG-318; MET-318; PRO-318; MET-319; VAL-321; VAL-331; SER-341; CYS-366; ASP-368; GLY-371; GLN-374; GLN-384; GLY-384; VAL-386; ALA-401; HIS-427; PHE-438 DEL; GLY-441; ASP-444; CYS-448; HIS-448; GLN-453 AND SER-489</scope>
    <scope>VARIANT GLN-43</scope>
    <scope>CHARACTERIZATION OF VARIANTS AH4 SER-42; SER-83; ILE-88; LEU-94; CYS-116; GLY-116; ARG-125; MET-129; HIS-133; SER-135; LEU-139; PRO-158; LEU-159; ASP-165; ALA-196; 254-LYS--ALA-259 DEL; PRO-299; ARG-314; MET-318; MET-319; VAL-331; CYS-366; ASP-368; GLY-371; GLN-374; GLN-384; ALA-401; PHE-438 DEL; GLY-441; CYS-448; HIS-448 AND GLN-453</scope>
    <scope>CHARACTERIZATION OF VARIANT GLN-43</scope>
</reference>
<reference key="25">
    <citation type="journal article" date="2011" name="Fertil. Steril.">
        <title>Novel homozygous p.R454C mutation in the CYP11B1 gene leads to 11beta-hydroxylase deficiency in a Chinese patient.</title>
        <authorList>
            <person name="Wu C."/>
            <person name="Zhou Q."/>
            <person name="Wan L."/>
            <person name="Ni L."/>
            <person name="Zheng C."/>
            <person name="Qian Y."/>
            <person name="Jin J."/>
        </authorList>
    </citation>
    <scope>VARIANT AH4 CYS-454</scope>
</reference>
<reference key="26">
    <citation type="journal article" date="2013" name="J. Clin. Endocrinol. Metab.">
        <title>A diagnosis not to be missed: nonclassic steroid 11beta-hydroxylase deficiency presenting with premature adrenarche and hirsutism.</title>
        <authorList>
            <person name="Reisch N."/>
            <person name="Hoegler W."/>
            <person name="Parajes S."/>
            <person name="Rose I.T."/>
            <person name="Dhir V."/>
            <person name="Goetzinger J."/>
            <person name="Arlt W."/>
            <person name="Krone N."/>
        </authorList>
    </citation>
    <scope>VARIANT AH4 ILE-79</scope>
    <scope>CHARACTERIZATION OF VARIANT AH4 ILE-79</scope>
</reference>
<reference key="27">
    <citation type="journal article" date="2014" name="Eur. J. Endocrinol.">
        <title>Characterisation of three novel CYP11B1 mutations in classic and non-classic 11beta-hydroxylase deficiency.</title>
        <authorList>
            <person name="Polat S."/>
            <person name="Kulle A."/>
            <person name="Karaca Z."/>
            <person name="Akkurt I."/>
            <person name="Kurtoglu S."/>
            <person name="Kelestimur F."/>
            <person name="Groetzinger J."/>
            <person name="Holterhus P.M."/>
            <person name="Riepe F.G."/>
        </authorList>
    </citation>
    <scope>VARIANTS AH4 LEU-150 AND LEU-463 INS</scope>
    <scope>CHARACTERIZATION OF VARIANTS AH4 LEU-150 AND LEU-463 INS</scope>
</reference>
<reference key="28">
    <citation type="journal article" date="2014" name="Eur. J. Hum. Genet.">
        <title>Congenital adrenal hyperplasia due to 11-beta-hydroxylase deficiency: functional consequences of four CYP11B1 mutations.</title>
        <authorList>
            <person name="Menabo S."/>
            <person name="Polat S."/>
            <person name="Baldazzi L."/>
            <person name="Kulle A.E."/>
            <person name="Holterhus P.M."/>
            <person name="Groetzinger J."/>
            <person name="Fanelli F."/>
            <person name="Balsamo A."/>
            <person name="Riepe F.G."/>
        </authorList>
    </citation>
    <scope>VARIANTS AH4 TRP-143; PRO-299; VAL-306; LYS-310 AND GLN-332</scope>
    <scope>CHARACTERIZATION OF VARIANTS AH4 TRP-143; VAL-306; LYS-310 AND GLN-332</scope>
</reference>
<reference key="29">
    <citation type="journal article" date="2014" name="Int. J. Endocrinol.">
        <title>Two novel CYP11B1 gene mutations in patients from two Croatian families with 11 beta-hydroxylase deficiency.</title>
        <authorList>
            <person name="Dumic K."/>
            <person name="Yuen T."/>
            <person name="Grubic Z."/>
            <person name="Kusec V."/>
            <person name="Barisic I."/>
            <person name="New M.I."/>
        </authorList>
    </citation>
    <scope>VARIANTS AH4 GLN-141; ARG-318 AND HIS-448</scope>
</reference>
<reference key="30">
    <citation type="journal article" date="2015" name="Clin. Endocrinol. (Oxf.)">
        <title>Characterization of the molecular genetic pathology in patients with 11beta-hydroxylase deficiency.</title>
        <authorList>
            <person name="Mooij C.F."/>
            <person name="Parajes S."/>
            <person name="Rose I.T."/>
            <person name="Taylor A.E."/>
            <person name="Bayraktaroglu T."/>
            <person name="Wass J.A."/>
            <person name="Connell J.M."/>
            <person name="Ray D.W."/>
            <person name="Arlt W."/>
            <person name="Krone N."/>
        </authorList>
    </citation>
    <scope>VARIANTS AH4 LEU-42 AND SER-42</scope>
    <scope>CHARACTERIZATION OF VARIANTS AH4 LEU-42 AND SER-42</scope>
</reference>
<reference key="31">
    <citation type="journal article" date="2016" name="J. Steroid Biochem. Mol. Biol.">
        <title>Phenotypic, metabolic, and molecular genetic characterization of six patients with congenital adrenal hyperplasia caused by novel mutations in the CYP11B1 gene.</title>
        <authorList>
            <person name="Nguyen H.H."/>
            <person name="Eiden-Plach A."/>
            <person name="Hannemann F."/>
            <person name="Malunowicz E.M."/>
            <person name="Hartmann M.F."/>
            <person name="Wudy S.A."/>
            <person name="Bernhardt R."/>
        </authorList>
    </citation>
    <scope>VARIANTS AH4 ARG-318; GLY-332 AND HIS-448</scope>
    <scope>CHARACTERIZATION OF VARIANT GLY-332</scope>
</reference>
<dbReference type="EC" id="1.14.15.4" evidence="11"/>
<dbReference type="EMBL" id="M32879">
    <property type="protein sequence ID" value="AAA52149.1"/>
    <property type="molecule type" value="Genomic_DNA"/>
</dbReference>
<dbReference type="EMBL" id="M32863">
    <property type="protein sequence ID" value="AAA52149.1"/>
    <property type="status" value="JOINED"/>
    <property type="molecule type" value="Genomic_DNA"/>
</dbReference>
<dbReference type="EMBL" id="M32878">
    <property type="protein sequence ID" value="AAA52149.1"/>
    <property type="status" value="JOINED"/>
    <property type="molecule type" value="Genomic_DNA"/>
</dbReference>
<dbReference type="EMBL" id="X55764">
    <property type="protein sequence ID" value="CAA39290.1"/>
    <property type="molecule type" value="mRNA"/>
</dbReference>
<dbReference type="EMBL" id="D16153">
    <property type="protein sequence ID" value="BAB71992.1"/>
    <property type="molecule type" value="Genomic_DNA"/>
</dbReference>
<dbReference type="EMBL" id="D16155">
    <property type="protein sequence ID" value="BAA03717.1"/>
    <property type="molecule type" value="Genomic_DNA"/>
</dbReference>
<dbReference type="EMBL" id="EU332839">
    <property type="protein sequence ID" value="ABY87528.1"/>
    <property type="molecule type" value="Genomic_DNA"/>
</dbReference>
<dbReference type="EMBL" id="AC083841">
    <property type="status" value="NOT_ANNOTATED_CDS"/>
    <property type="molecule type" value="Genomic_DNA"/>
</dbReference>
<dbReference type="EMBL" id="CH471162">
    <property type="protein sequence ID" value="EAW82293.1"/>
    <property type="molecule type" value="Genomic_DNA"/>
</dbReference>
<dbReference type="EMBL" id="BC096286">
    <property type="protein sequence ID" value="AAH96286.1"/>
    <property type="molecule type" value="mRNA"/>
</dbReference>
<dbReference type="EMBL" id="BC096287">
    <property type="protein sequence ID" value="AAH96287.1"/>
    <property type="molecule type" value="mRNA"/>
</dbReference>
<dbReference type="EMBL" id="M24667">
    <property type="protein sequence ID" value="AAA52148.1"/>
    <property type="status" value="ALT_SEQ"/>
    <property type="molecule type" value="mRNA"/>
</dbReference>
<dbReference type="EMBL" id="D10169">
    <property type="protein sequence ID" value="BAA01039.1"/>
    <property type="molecule type" value="Genomic_DNA"/>
</dbReference>
<dbReference type="CCDS" id="CCDS34953.1">
    <molecule id="P15538-2"/>
</dbReference>
<dbReference type="CCDS" id="CCDS6392.1">
    <molecule id="P15538-1"/>
</dbReference>
<dbReference type="PIR" id="S11338">
    <property type="entry name" value="S11338"/>
</dbReference>
<dbReference type="RefSeq" id="NP_000488.3">
    <molecule id="P15538-1"/>
    <property type="nucleotide sequence ID" value="NM_000497.3"/>
</dbReference>
<dbReference type="RefSeq" id="NP_001021384.1">
    <molecule id="P15538-2"/>
    <property type="nucleotide sequence ID" value="NM_001026213.1"/>
</dbReference>
<dbReference type="PDB" id="6M7X">
    <property type="method" value="X-ray"/>
    <property type="resolution" value="2.10 A"/>
    <property type="chains" value="A/B=31-503"/>
</dbReference>
<dbReference type="PDB" id="7E7F">
    <property type="method" value="X-ray"/>
    <property type="resolution" value="1.40 A"/>
    <property type="chains" value="A=28-503"/>
</dbReference>
<dbReference type="PDBsum" id="6M7X"/>
<dbReference type="PDBsum" id="7E7F"/>
<dbReference type="SMR" id="P15538"/>
<dbReference type="BioGRID" id="107956">
    <property type="interactions" value="4"/>
</dbReference>
<dbReference type="CORUM" id="P15538"/>
<dbReference type="FunCoup" id="P15538">
    <property type="interactions" value="134"/>
</dbReference>
<dbReference type="IntAct" id="P15538">
    <property type="interactions" value="1"/>
</dbReference>
<dbReference type="STRING" id="9606.ENSP00000292427"/>
<dbReference type="BindingDB" id="P15538"/>
<dbReference type="ChEMBL" id="CHEMBL1908"/>
<dbReference type="DrugBank" id="DB04581">
    <property type="generic name" value="1-benzylimidazole"/>
</dbReference>
<dbReference type="DrugBank" id="DB04630">
    <property type="generic name" value="Aldosterone"/>
</dbReference>
<dbReference type="DrugBank" id="DB00501">
    <property type="generic name" value="Cimetidine"/>
</dbReference>
<dbReference type="DrugBank" id="DB01234">
    <property type="generic name" value="Dexamethasone"/>
</dbReference>
<dbReference type="DrugBank" id="DB14649">
    <property type="generic name" value="Dexamethasone acetate"/>
</dbReference>
<dbReference type="DrugBank" id="DB00292">
    <property type="generic name" value="Etomidate"/>
</dbReference>
<dbReference type="DrugBank" id="DB16832">
    <property type="generic name" value="Fadrozole"/>
</dbReference>
<dbReference type="DrugBank" id="DB00741">
    <property type="generic name" value="Hydrocortisone"/>
</dbReference>
<dbReference type="DrugBank" id="DB14539">
    <property type="generic name" value="Hydrocortisone acetate"/>
</dbReference>
<dbReference type="DrugBank" id="DB14540">
    <property type="generic name" value="Hydrocortisone butyrate"/>
</dbReference>
<dbReference type="DrugBank" id="DB14543">
    <property type="generic name" value="Hydrocortisone probutate"/>
</dbReference>
<dbReference type="DrugBank" id="DB14545">
    <property type="generic name" value="Hydrocortisone succinate"/>
</dbReference>
<dbReference type="DrugBank" id="DB14544">
    <property type="generic name" value="Hydrocortisone valerate"/>
</dbReference>
<dbReference type="DrugBank" id="DB01026">
    <property type="generic name" value="Ketoconazole"/>
</dbReference>
<dbReference type="DrugBank" id="DB05667">
    <property type="generic name" value="Levoketoconazole"/>
</dbReference>
<dbReference type="DrugBank" id="DB01011">
    <property type="generic name" value="Metyrapone"/>
</dbReference>
<dbReference type="DrugBank" id="DB01388">
    <property type="generic name" value="Mibefradil"/>
</dbReference>
<dbReference type="DrugBank" id="DB01110">
    <property type="generic name" value="Miconazole"/>
</dbReference>
<dbReference type="DrugBank" id="DB00648">
    <property type="generic name" value="Mitotane"/>
</dbReference>
<dbReference type="DrugBank" id="DB11837">
    <property type="generic name" value="Osilodrostat"/>
</dbReference>
<dbReference type="DrugBank" id="DB00252">
    <property type="generic name" value="Phenytoin"/>
</dbReference>
<dbReference type="DrugBank" id="DB00421">
    <property type="generic name" value="Spironolactone"/>
</dbReference>
<dbReference type="DrugCentral" id="P15538"/>
<dbReference type="GuidetoPHARMACOLOGY" id="1359"/>
<dbReference type="SwissLipids" id="SLP:000001197"/>
<dbReference type="iPTMnet" id="P15538"/>
<dbReference type="PhosphoSitePlus" id="P15538"/>
<dbReference type="BioMuta" id="CYP11B1"/>
<dbReference type="DMDM" id="215274267"/>
<dbReference type="MassIVE" id="P15538"/>
<dbReference type="PaxDb" id="9606-ENSP00000292427"/>
<dbReference type="PeptideAtlas" id="P15538"/>
<dbReference type="ProteomicsDB" id="53185">
    <molecule id="P15538-1"/>
</dbReference>
<dbReference type="ProteomicsDB" id="53186">
    <molecule id="P15538-2"/>
</dbReference>
<dbReference type="Antibodypedia" id="27799">
    <property type="antibodies" value="215 antibodies from 23 providers"/>
</dbReference>
<dbReference type="DNASU" id="1584"/>
<dbReference type="Ensembl" id="ENST00000292427.10">
    <molecule id="P15538-1"/>
    <property type="protein sequence ID" value="ENSP00000292427.5"/>
    <property type="gene ID" value="ENSG00000160882.13"/>
</dbReference>
<dbReference type="Ensembl" id="ENST00000517471.5">
    <molecule id="P15538-2"/>
    <property type="protein sequence ID" value="ENSP00000428043.1"/>
    <property type="gene ID" value="ENSG00000160882.13"/>
</dbReference>
<dbReference type="GeneID" id="1584"/>
<dbReference type="KEGG" id="hsa:1584"/>
<dbReference type="MANE-Select" id="ENST00000292427.10">
    <property type="protein sequence ID" value="ENSP00000292427.5"/>
    <property type="RefSeq nucleotide sequence ID" value="NM_000497.4"/>
    <property type="RefSeq protein sequence ID" value="NP_000488.3"/>
</dbReference>
<dbReference type="UCSC" id="uc003yxi.4">
    <molecule id="P15538-1"/>
    <property type="organism name" value="human"/>
</dbReference>
<dbReference type="AGR" id="HGNC:2591"/>
<dbReference type="CTD" id="1584"/>
<dbReference type="DisGeNET" id="1584"/>
<dbReference type="GeneCards" id="CYP11B1"/>
<dbReference type="HGNC" id="HGNC:2591">
    <property type="gene designation" value="CYP11B1"/>
</dbReference>
<dbReference type="HPA" id="ENSG00000160882">
    <property type="expression patterns" value="Tissue enriched (adrenal)"/>
</dbReference>
<dbReference type="MalaCards" id="CYP11B1"/>
<dbReference type="MIM" id="103900">
    <property type="type" value="phenotype"/>
</dbReference>
<dbReference type="MIM" id="202010">
    <property type="type" value="phenotype"/>
</dbReference>
<dbReference type="MIM" id="610613">
    <property type="type" value="gene"/>
</dbReference>
<dbReference type="neXtProt" id="NX_P15538"/>
<dbReference type="OpenTargets" id="ENSG00000160882"/>
<dbReference type="Orphanet" id="90795">
    <property type="disease" value="Congenital adrenal hyperplasia due to 11-beta-hydroxylase deficiency"/>
</dbReference>
<dbReference type="Orphanet" id="403">
    <property type="disease" value="Familial hyperaldosteronism type I"/>
</dbReference>
<dbReference type="PharmGKB" id="PA133"/>
<dbReference type="VEuPathDB" id="HostDB:ENSG00000160882"/>
<dbReference type="eggNOG" id="KOG0159">
    <property type="taxonomic scope" value="Eukaryota"/>
</dbReference>
<dbReference type="GeneTree" id="ENSGT00940000163354"/>
<dbReference type="HOGENOM" id="CLU_001570_28_4_1"/>
<dbReference type="InParanoid" id="P15538"/>
<dbReference type="OMA" id="RMGINSW"/>
<dbReference type="OrthoDB" id="3945418at2759"/>
<dbReference type="PAN-GO" id="P15538">
    <property type="GO annotations" value="8 GO annotations based on evolutionary models"/>
</dbReference>
<dbReference type="PhylomeDB" id="P15538"/>
<dbReference type="TreeFam" id="TF105094"/>
<dbReference type="BioCyc" id="MetaCyc:HS08547-MONOMER"/>
<dbReference type="BRENDA" id="1.14.15.4">
    <property type="organism ID" value="2681"/>
</dbReference>
<dbReference type="PathwayCommons" id="P15538"/>
<dbReference type="Reactome" id="R-HSA-194002">
    <property type="pathway name" value="Glucocorticoid biosynthesis"/>
</dbReference>
<dbReference type="Reactome" id="R-HSA-211976">
    <property type="pathway name" value="Endogenous sterols"/>
</dbReference>
<dbReference type="Reactome" id="R-HSA-5579017">
    <property type="pathway name" value="Defective CYP11B1 causes AH4"/>
</dbReference>
<dbReference type="SignaLink" id="P15538"/>
<dbReference type="SIGNOR" id="P15538"/>
<dbReference type="UniPathway" id="UPA00788"/>
<dbReference type="BioGRID-ORCS" id="1584">
    <property type="hits" value="16 hits in 1149 CRISPR screens"/>
</dbReference>
<dbReference type="ChiTaRS" id="CYP11B1">
    <property type="organism name" value="human"/>
</dbReference>
<dbReference type="GeneWiki" id="Steroid_11-beta-hydroxylase"/>
<dbReference type="GenomeRNAi" id="1584"/>
<dbReference type="Pharos" id="P15538">
    <property type="development level" value="Tclin"/>
</dbReference>
<dbReference type="PRO" id="PR:P15538"/>
<dbReference type="Proteomes" id="UP000005640">
    <property type="component" value="Chromosome 8"/>
</dbReference>
<dbReference type="RNAct" id="P15538">
    <property type="molecule type" value="protein"/>
</dbReference>
<dbReference type="Bgee" id="ENSG00000160882">
    <property type="expression patterns" value="Expressed in right adrenal gland cortex and 80 other cell types or tissues"/>
</dbReference>
<dbReference type="ExpressionAtlas" id="P15538">
    <property type="expression patterns" value="baseline and differential"/>
</dbReference>
<dbReference type="GO" id="GO:0005743">
    <property type="term" value="C:mitochondrial inner membrane"/>
    <property type="evidence" value="ECO:0000318"/>
    <property type="project" value="GO_Central"/>
</dbReference>
<dbReference type="GO" id="GO:0005739">
    <property type="term" value="C:mitochondrion"/>
    <property type="evidence" value="ECO:0000314"/>
    <property type="project" value="BHF-UCL"/>
</dbReference>
<dbReference type="GO" id="GO:0047783">
    <property type="term" value="F:corticosterone 18-monooxygenase activity"/>
    <property type="evidence" value="ECO:0000318"/>
    <property type="project" value="GO_Central"/>
</dbReference>
<dbReference type="GO" id="GO:0020037">
    <property type="term" value="F:heme binding"/>
    <property type="evidence" value="ECO:0000305"/>
    <property type="project" value="BHF-UCL"/>
</dbReference>
<dbReference type="GO" id="GO:0005506">
    <property type="term" value="F:iron ion binding"/>
    <property type="evidence" value="ECO:0007669"/>
    <property type="project" value="InterPro"/>
</dbReference>
<dbReference type="GO" id="GO:0004507">
    <property type="term" value="F:steroid 11-beta-monooxygenase activity"/>
    <property type="evidence" value="ECO:0000314"/>
    <property type="project" value="BHF-UCL"/>
</dbReference>
<dbReference type="GO" id="GO:0032342">
    <property type="term" value="P:aldosterone biosynthetic process"/>
    <property type="evidence" value="ECO:0000314"/>
    <property type="project" value="BHF-UCL"/>
</dbReference>
<dbReference type="GO" id="GO:0006700">
    <property type="term" value="P:C21-steroid hormone biosynthetic process"/>
    <property type="evidence" value="ECO:0000314"/>
    <property type="project" value="BHF-UCL"/>
</dbReference>
<dbReference type="GO" id="GO:0032870">
    <property type="term" value="P:cellular response to hormone stimulus"/>
    <property type="evidence" value="ECO:0000270"/>
    <property type="project" value="UniProtKB"/>
</dbReference>
<dbReference type="GO" id="GO:0071375">
    <property type="term" value="P:cellular response to peptide hormone stimulus"/>
    <property type="evidence" value="ECO:0000318"/>
    <property type="project" value="GO_Central"/>
</dbReference>
<dbReference type="GO" id="GO:0035865">
    <property type="term" value="P:cellular response to potassium ion"/>
    <property type="evidence" value="ECO:0000270"/>
    <property type="project" value="UniProtKB"/>
</dbReference>
<dbReference type="GO" id="GO:0008203">
    <property type="term" value="P:cholesterol metabolic process"/>
    <property type="evidence" value="ECO:0000318"/>
    <property type="project" value="GO_Central"/>
</dbReference>
<dbReference type="GO" id="GO:0034651">
    <property type="term" value="P:cortisol biosynthetic process"/>
    <property type="evidence" value="ECO:0000314"/>
    <property type="project" value="BHF-UCL"/>
</dbReference>
<dbReference type="GO" id="GO:0034650">
    <property type="term" value="P:cortisol metabolic process"/>
    <property type="evidence" value="ECO:0000318"/>
    <property type="project" value="GO_Central"/>
</dbReference>
<dbReference type="GO" id="GO:0006704">
    <property type="term" value="P:glucocorticoid biosynthetic process"/>
    <property type="evidence" value="ECO:0000318"/>
    <property type="project" value="GO_Central"/>
</dbReference>
<dbReference type="GO" id="GO:0042593">
    <property type="term" value="P:glucose homeostasis"/>
    <property type="evidence" value="ECO:0000304"/>
    <property type="project" value="BHF-UCL"/>
</dbReference>
<dbReference type="GO" id="GO:0006955">
    <property type="term" value="P:immune response"/>
    <property type="evidence" value="ECO:0000304"/>
    <property type="project" value="BHF-UCL"/>
</dbReference>
<dbReference type="GO" id="GO:0008217">
    <property type="term" value="P:regulation of blood pressure"/>
    <property type="evidence" value="ECO:0000315"/>
    <property type="project" value="BHF-UCL"/>
</dbReference>
<dbReference type="GO" id="GO:0016125">
    <property type="term" value="P:sterol metabolic process"/>
    <property type="evidence" value="ECO:0000304"/>
    <property type="project" value="Reactome"/>
</dbReference>
<dbReference type="CDD" id="cd20644">
    <property type="entry name" value="CYP11B"/>
    <property type="match status" value="1"/>
</dbReference>
<dbReference type="FunFam" id="1.10.630.10:FF:000015">
    <property type="entry name" value="Cholesterol side-chain cleavage enzyme, mitochondrial"/>
    <property type="match status" value="1"/>
</dbReference>
<dbReference type="Gene3D" id="1.10.630.10">
    <property type="entry name" value="Cytochrome P450"/>
    <property type="match status" value="1"/>
</dbReference>
<dbReference type="InterPro" id="IPR050479">
    <property type="entry name" value="CYP11_CYP27_families"/>
</dbReference>
<dbReference type="InterPro" id="IPR001128">
    <property type="entry name" value="Cyt_P450"/>
</dbReference>
<dbReference type="InterPro" id="IPR017972">
    <property type="entry name" value="Cyt_P450_CS"/>
</dbReference>
<dbReference type="InterPro" id="IPR002399">
    <property type="entry name" value="Cyt_P450_mitochondrial"/>
</dbReference>
<dbReference type="InterPro" id="IPR036396">
    <property type="entry name" value="Cyt_P450_sf"/>
</dbReference>
<dbReference type="PANTHER" id="PTHR24279">
    <property type="entry name" value="CYTOCHROME P450"/>
    <property type="match status" value="1"/>
</dbReference>
<dbReference type="PANTHER" id="PTHR24279:SF115">
    <property type="entry name" value="CYTOCHROME P450 11B1, MITOCHONDRIAL"/>
    <property type="match status" value="1"/>
</dbReference>
<dbReference type="Pfam" id="PF00067">
    <property type="entry name" value="p450"/>
    <property type="match status" value="1"/>
</dbReference>
<dbReference type="PRINTS" id="PR00408">
    <property type="entry name" value="MITP450"/>
</dbReference>
<dbReference type="PRINTS" id="PR00385">
    <property type="entry name" value="P450"/>
</dbReference>
<dbReference type="SUPFAM" id="SSF48264">
    <property type="entry name" value="Cytochrome P450"/>
    <property type="match status" value="1"/>
</dbReference>
<dbReference type="PROSITE" id="PS00086">
    <property type="entry name" value="CYTOCHROME_P450"/>
    <property type="match status" value="1"/>
</dbReference>
<gene>
    <name evidence="29 37" type="primary">CYP11B1</name>
    <name type="synonym">S11BH</name>
</gene>
<protein>
    <recommendedName>
        <fullName>Cytochrome P450 11B1, mitochondrial</fullName>
        <shortName>CYP11B1</shortName>
    </recommendedName>
    <alternativeName>
        <fullName>CYPXIB1</fullName>
    </alternativeName>
    <alternativeName>
        <fullName>Cytochrome P-450c11</fullName>
        <shortName>Cytochrome P450C11</shortName>
    </alternativeName>
    <alternativeName>
        <fullName evidence="30">Steroid 11-beta-hydroxylase, CYP11B1</fullName>
        <ecNumber evidence="11">1.14.15.4</ecNumber>
    </alternativeName>
</protein>
<proteinExistence type="evidence at protein level"/>
<organism>
    <name type="scientific">Homo sapiens</name>
    <name type="common">Human</name>
    <dbReference type="NCBI Taxonomy" id="9606"/>
    <lineage>
        <taxon>Eukaryota</taxon>
        <taxon>Metazoa</taxon>
        <taxon>Chordata</taxon>
        <taxon>Craniata</taxon>
        <taxon>Vertebrata</taxon>
        <taxon>Euteleostomi</taxon>
        <taxon>Mammalia</taxon>
        <taxon>Eutheria</taxon>
        <taxon>Euarchontoglires</taxon>
        <taxon>Primates</taxon>
        <taxon>Haplorrhini</taxon>
        <taxon>Catarrhini</taxon>
        <taxon>Hominidae</taxon>
        <taxon>Homo</taxon>
    </lineage>
</organism>
<evidence type="ECO:0000250" key="1">
    <source>
        <dbReference type="UniProtKB" id="P14137"/>
    </source>
</evidence>
<evidence type="ECO:0000250" key="2">
    <source>
        <dbReference type="UniProtKB" id="P15393"/>
    </source>
</evidence>
<evidence type="ECO:0000250" key="3">
    <source>
        <dbReference type="UniProtKB" id="P19099"/>
    </source>
</evidence>
<evidence type="ECO:0000269" key="4">
    <source>
    </source>
</evidence>
<evidence type="ECO:0000269" key="5">
    <source>
    </source>
</evidence>
<evidence type="ECO:0000269" key="6">
    <source>
    </source>
</evidence>
<evidence type="ECO:0000269" key="7">
    <source>
    </source>
</evidence>
<evidence type="ECO:0000269" key="8">
    <source>
    </source>
</evidence>
<evidence type="ECO:0000269" key="9">
    <source>
    </source>
</evidence>
<evidence type="ECO:0000269" key="10">
    <source>
    </source>
</evidence>
<evidence type="ECO:0000269" key="11">
    <source>
    </source>
</evidence>
<evidence type="ECO:0000269" key="12">
    <source>
    </source>
</evidence>
<evidence type="ECO:0000269" key="13">
    <source>
    </source>
</evidence>
<evidence type="ECO:0000269" key="14">
    <source>
    </source>
</evidence>
<evidence type="ECO:0000269" key="15">
    <source>
    </source>
</evidence>
<evidence type="ECO:0000269" key="16">
    <source>
    </source>
</evidence>
<evidence type="ECO:0000269" key="17">
    <source>
    </source>
</evidence>
<evidence type="ECO:0000269" key="18">
    <source>
    </source>
</evidence>
<evidence type="ECO:0000269" key="19">
    <source>
    </source>
</evidence>
<evidence type="ECO:0000269" key="20">
    <source>
    </source>
</evidence>
<evidence type="ECO:0000269" key="21">
    <source>
    </source>
</evidence>
<evidence type="ECO:0000269" key="22">
    <source>
    </source>
</evidence>
<evidence type="ECO:0000269" key="23">
    <source>
    </source>
</evidence>
<evidence type="ECO:0000269" key="24">
    <source>
    </source>
</evidence>
<evidence type="ECO:0000269" key="25">
    <source>
    </source>
</evidence>
<evidence type="ECO:0000269" key="26">
    <source>
    </source>
</evidence>
<evidence type="ECO:0000269" key="27">
    <source>
    </source>
</evidence>
<evidence type="ECO:0000303" key="28">
    <source>
    </source>
</evidence>
<evidence type="ECO:0000303" key="29">
    <source>
    </source>
</evidence>
<evidence type="ECO:0000303" key="30">
    <source>
    </source>
</evidence>
<evidence type="ECO:0000305" key="31"/>
<evidence type="ECO:0000305" key="32">
    <source>
    </source>
</evidence>
<evidence type="ECO:0000305" key="33">
    <source>
    </source>
</evidence>
<evidence type="ECO:0000305" key="34">
    <source>
    </source>
</evidence>
<evidence type="ECO:0000305" key="35">
    <source>
    </source>
</evidence>
<evidence type="ECO:0000305" key="36">
    <source>
    </source>
</evidence>
<evidence type="ECO:0000312" key="37">
    <source>
        <dbReference type="HGNC" id="HGNC:2591"/>
    </source>
</evidence>
<evidence type="ECO:0007829" key="38">
    <source>
        <dbReference type="PDB" id="7E7F"/>
    </source>
</evidence>
<accession>P15538</accession>
<accession>Q14095</accession>
<accession>Q4VAQ8</accession>
<accession>Q4VAQ9</accession>
<accession>Q9UML2</accession>